<keyword id="KW-0997">Cell inner membrane</keyword>
<keyword id="KW-1003">Cell membrane</keyword>
<keyword id="KW-0406">Ion transport</keyword>
<keyword id="KW-0472">Membrane</keyword>
<keyword id="KW-0520">NAD</keyword>
<keyword id="KW-1185">Reference proteome</keyword>
<keyword id="KW-0915">Sodium</keyword>
<keyword id="KW-0739">Sodium transport</keyword>
<keyword id="KW-1278">Translocase</keyword>
<keyword id="KW-0812">Transmembrane</keyword>
<keyword id="KW-1133">Transmembrane helix</keyword>
<keyword id="KW-0813">Transport</keyword>
<keyword id="KW-0830">Ubiquinone</keyword>
<feature type="chain" id="PRO_1000191705" description="Na(+)-translocating NADH-quinone reductase subunit E">
    <location>
        <begin position="1"/>
        <end position="198"/>
    </location>
</feature>
<feature type="transmembrane region" description="Helical" evidence="1">
    <location>
        <begin position="11"/>
        <end position="31"/>
    </location>
</feature>
<feature type="transmembrane region" description="Helical" evidence="1">
    <location>
        <begin position="39"/>
        <end position="59"/>
    </location>
</feature>
<feature type="transmembrane region" description="Helical" evidence="1">
    <location>
        <begin position="77"/>
        <end position="97"/>
    </location>
</feature>
<feature type="transmembrane region" description="Helical" evidence="1">
    <location>
        <begin position="110"/>
        <end position="130"/>
    </location>
</feature>
<feature type="transmembrane region" description="Helical" evidence="1">
    <location>
        <begin position="140"/>
        <end position="160"/>
    </location>
</feature>
<feature type="transmembrane region" description="Helical" evidence="1">
    <location>
        <begin position="176"/>
        <end position="196"/>
    </location>
</feature>
<dbReference type="EC" id="7.2.1.1" evidence="1"/>
<dbReference type="EMBL" id="CP000020">
    <property type="protein sequence ID" value="AAW85224.2"/>
    <property type="molecule type" value="Genomic_DNA"/>
</dbReference>
<dbReference type="RefSeq" id="WP_005418136.1">
    <property type="nucleotide sequence ID" value="NZ_CAWLES010000001.1"/>
</dbReference>
<dbReference type="RefSeq" id="YP_204112.2">
    <property type="nucleotide sequence ID" value="NC_006840.2"/>
</dbReference>
<dbReference type="SMR" id="Q5E6X2"/>
<dbReference type="STRING" id="312309.VF_0729"/>
<dbReference type="EnsemblBacteria" id="AAW85224">
    <property type="protein sequence ID" value="AAW85224"/>
    <property type="gene ID" value="VF_0729"/>
</dbReference>
<dbReference type="GeneID" id="54163384"/>
<dbReference type="KEGG" id="vfi:VF_0729"/>
<dbReference type="PATRIC" id="fig|312309.11.peg.723"/>
<dbReference type="eggNOG" id="COG2209">
    <property type="taxonomic scope" value="Bacteria"/>
</dbReference>
<dbReference type="HOGENOM" id="CLU_095255_0_0_6"/>
<dbReference type="OrthoDB" id="9803631at2"/>
<dbReference type="Proteomes" id="UP000000537">
    <property type="component" value="Chromosome I"/>
</dbReference>
<dbReference type="GO" id="GO:0009276">
    <property type="term" value="C:Gram-negative-bacterium-type cell wall"/>
    <property type="evidence" value="ECO:0007669"/>
    <property type="project" value="InterPro"/>
</dbReference>
<dbReference type="GO" id="GO:0005886">
    <property type="term" value="C:plasma membrane"/>
    <property type="evidence" value="ECO:0007669"/>
    <property type="project" value="UniProtKB-SubCell"/>
</dbReference>
<dbReference type="GO" id="GO:0016655">
    <property type="term" value="F:oxidoreductase activity, acting on NAD(P)H, quinone or similar compound as acceptor"/>
    <property type="evidence" value="ECO:0007669"/>
    <property type="project" value="UniProtKB-UniRule"/>
</dbReference>
<dbReference type="GO" id="GO:0022904">
    <property type="term" value="P:respiratory electron transport chain"/>
    <property type="evidence" value="ECO:0007669"/>
    <property type="project" value="InterPro"/>
</dbReference>
<dbReference type="GO" id="GO:0006814">
    <property type="term" value="P:sodium ion transport"/>
    <property type="evidence" value="ECO:0007669"/>
    <property type="project" value="UniProtKB-UniRule"/>
</dbReference>
<dbReference type="HAMAP" id="MF_00429">
    <property type="entry name" value="NqrE"/>
    <property type="match status" value="1"/>
</dbReference>
<dbReference type="InterPro" id="IPR003667">
    <property type="entry name" value="NqrDE/RnfAE"/>
</dbReference>
<dbReference type="InterPro" id="IPR050133">
    <property type="entry name" value="NqrDE/RnfAE_oxidrdctase"/>
</dbReference>
<dbReference type="InterPro" id="IPR010967">
    <property type="entry name" value="NqrE"/>
</dbReference>
<dbReference type="NCBIfam" id="TIGR01940">
    <property type="entry name" value="nqrE"/>
    <property type="match status" value="1"/>
</dbReference>
<dbReference type="PANTHER" id="PTHR30335">
    <property type="entry name" value="INTEGRAL MEMBRANE PROTEIN OF SOXR-REDUCING COMPLEX"/>
    <property type="match status" value="1"/>
</dbReference>
<dbReference type="PANTHER" id="PTHR30335:SF1">
    <property type="entry name" value="NA(+)-TRANSLOCATING NADH-QUINONE REDUCTASE SUBUNIT E"/>
    <property type="match status" value="1"/>
</dbReference>
<dbReference type="Pfam" id="PF02508">
    <property type="entry name" value="Rnf-Nqr"/>
    <property type="match status" value="1"/>
</dbReference>
<dbReference type="PIRSF" id="PIRSF006102">
    <property type="entry name" value="NQR_DE"/>
    <property type="match status" value="1"/>
</dbReference>
<proteinExistence type="inferred from homology"/>
<name>NQRE_ALIF1</name>
<sequence>MEHYISLLVKSIFIENMALSFFLGMCTFLAVSKKVKTSFGLGVAVVVVLTIAVPVNNLVYTYLLKENALVAGVDLTFLSFITFIGVIAALVQILEMILDRFFPPLYNALGIFLPLITVNCAIFGGVSFMVQRDYNFAESVVYGFGSGIGWMLAIVALAGIREKMKYSDVPPGLRGLGITFITVGLMALGFMSFSGVQL</sequence>
<accession>Q5E6X2</accession>
<gene>
    <name evidence="1" type="primary">nqrE</name>
    <name type="ordered locus">VF_0729</name>
    <name type="ORF">VF0730</name>
</gene>
<comment type="function">
    <text evidence="1">NQR complex catalyzes the reduction of ubiquinone-1 to ubiquinol by two successive reactions, coupled with the transport of Na(+) ions from the cytoplasm to the periplasm. NqrA to NqrE are probably involved in the second step, the conversion of ubisemiquinone to ubiquinol.</text>
</comment>
<comment type="catalytic activity">
    <reaction evidence="1">
        <text>a ubiquinone + n Na(+)(in) + NADH + H(+) = a ubiquinol + n Na(+)(out) + NAD(+)</text>
        <dbReference type="Rhea" id="RHEA:47748"/>
        <dbReference type="Rhea" id="RHEA-COMP:9565"/>
        <dbReference type="Rhea" id="RHEA-COMP:9566"/>
        <dbReference type="ChEBI" id="CHEBI:15378"/>
        <dbReference type="ChEBI" id="CHEBI:16389"/>
        <dbReference type="ChEBI" id="CHEBI:17976"/>
        <dbReference type="ChEBI" id="CHEBI:29101"/>
        <dbReference type="ChEBI" id="CHEBI:57540"/>
        <dbReference type="ChEBI" id="CHEBI:57945"/>
        <dbReference type="EC" id="7.2.1.1"/>
    </reaction>
</comment>
<comment type="subunit">
    <text evidence="1">Composed of six subunits; NqrA, NqrB, NqrC, NqrD, NqrE and NqrF.</text>
</comment>
<comment type="subcellular location">
    <subcellularLocation>
        <location evidence="1">Cell inner membrane</location>
        <topology evidence="1">Multi-pass membrane protein</topology>
    </subcellularLocation>
</comment>
<comment type="similarity">
    <text evidence="1">Belongs to the NqrDE/RnfAE family.</text>
</comment>
<organism>
    <name type="scientific">Aliivibrio fischeri (strain ATCC 700601 / ES114)</name>
    <name type="common">Vibrio fischeri</name>
    <dbReference type="NCBI Taxonomy" id="312309"/>
    <lineage>
        <taxon>Bacteria</taxon>
        <taxon>Pseudomonadati</taxon>
        <taxon>Pseudomonadota</taxon>
        <taxon>Gammaproteobacteria</taxon>
        <taxon>Vibrionales</taxon>
        <taxon>Vibrionaceae</taxon>
        <taxon>Aliivibrio</taxon>
    </lineage>
</organism>
<reference key="1">
    <citation type="journal article" date="2005" name="Proc. Natl. Acad. Sci. U.S.A.">
        <title>Complete genome sequence of Vibrio fischeri: a symbiotic bacterium with pathogenic congeners.</title>
        <authorList>
            <person name="Ruby E.G."/>
            <person name="Urbanowski M."/>
            <person name="Campbell J."/>
            <person name="Dunn A."/>
            <person name="Faini M."/>
            <person name="Gunsalus R."/>
            <person name="Lostroh P."/>
            <person name="Lupp C."/>
            <person name="McCann J."/>
            <person name="Millikan D."/>
            <person name="Schaefer A."/>
            <person name="Stabb E."/>
            <person name="Stevens A."/>
            <person name="Visick K."/>
            <person name="Whistler C."/>
            <person name="Greenberg E.P."/>
        </authorList>
    </citation>
    <scope>NUCLEOTIDE SEQUENCE [LARGE SCALE GENOMIC DNA]</scope>
    <source>
        <strain>ATCC 700601 / ES114</strain>
    </source>
</reference>
<reference key="2">
    <citation type="journal article" date="2008" name="BMC Genomics">
        <title>Comparative genomics-based investigation of resequencing targets in Vibrio fischeri: focus on point miscalls and artefactual expansions.</title>
        <authorList>
            <person name="Mandel M.J."/>
            <person name="Stabb E.V."/>
            <person name="Ruby E.G."/>
        </authorList>
    </citation>
    <scope>SEQUENCE REVISION</scope>
</reference>
<protein>
    <recommendedName>
        <fullName evidence="1">Na(+)-translocating NADH-quinone reductase subunit E</fullName>
        <shortName evidence="1">Na(+)-NQR subunit E</shortName>
        <shortName evidence="1">Na(+)-translocating NQR subunit E</shortName>
        <ecNumber evidence="1">7.2.1.1</ecNumber>
    </recommendedName>
    <alternativeName>
        <fullName evidence="1">NQR complex subunit E</fullName>
    </alternativeName>
    <alternativeName>
        <fullName evidence="1">NQR-1 subunit E</fullName>
    </alternativeName>
</protein>
<evidence type="ECO:0000255" key="1">
    <source>
        <dbReference type="HAMAP-Rule" id="MF_00429"/>
    </source>
</evidence>